<protein>
    <recommendedName>
        <fullName evidence="1">Ribonuclease HII</fullName>
        <shortName evidence="1">RNase HII</shortName>
        <ecNumber evidence="1">3.1.26.4</ecNumber>
    </recommendedName>
</protein>
<organism>
    <name type="scientific">Chlorobium phaeovibrioides (strain DSM 265 / 1930)</name>
    <name type="common">Prosthecochloris vibrioformis (strain DSM 265)</name>
    <dbReference type="NCBI Taxonomy" id="290318"/>
    <lineage>
        <taxon>Bacteria</taxon>
        <taxon>Pseudomonadati</taxon>
        <taxon>Chlorobiota</taxon>
        <taxon>Chlorobiia</taxon>
        <taxon>Chlorobiales</taxon>
        <taxon>Chlorobiaceae</taxon>
        <taxon>Chlorobium/Pelodictyon group</taxon>
        <taxon>Chlorobium</taxon>
    </lineage>
</organism>
<evidence type="ECO:0000255" key="1">
    <source>
        <dbReference type="HAMAP-Rule" id="MF_00052"/>
    </source>
</evidence>
<evidence type="ECO:0000255" key="2">
    <source>
        <dbReference type="PROSITE-ProRule" id="PRU01319"/>
    </source>
</evidence>
<gene>
    <name evidence="1" type="primary">rnhB</name>
    <name type="ordered locus">Cvib_0015</name>
</gene>
<dbReference type="EC" id="3.1.26.4" evidence="1"/>
<dbReference type="EMBL" id="CP000607">
    <property type="protein sequence ID" value="ABP36044.1"/>
    <property type="molecule type" value="Genomic_DNA"/>
</dbReference>
<dbReference type="SMR" id="A4SC35"/>
<dbReference type="STRING" id="290318.Cvib_0015"/>
<dbReference type="KEGG" id="pvi:Cvib_0015"/>
<dbReference type="eggNOG" id="COG0164">
    <property type="taxonomic scope" value="Bacteria"/>
</dbReference>
<dbReference type="HOGENOM" id="CLU_036532_3_2_10"/>
<dbReference type="GO" id="GO:0005737">
    <property type="term" value="C:cytoplasm"/>
    <property type="evidence" value="ECO:0007669"/>
    <property type="project" value="UniProtKB-SubCell"/>
</dbReference>
<dbReference type="GO" id="GO:0032299">
    <property type="term" value="C:ribonuclease H2 complex"/>
    <property type="evidence" value="ECO:0007669"/>
    <property type="project" value="TreeGrafter"/>
</dbReference>
<dbReference type="GO" id="GO:0030145">
    <property type="term" value="F:manganese ion binding"/>
    <property type="evidence" value="ECO:0007669"/>
    <property type="project" value="UniProtKB-UniRule"/>
</dbReference>
<dbReference type="GO" id="GO:0003723">
    <property type="term" value="F:RNA binding"/>
    <property type="evidence" value="ECO:0007669"/>
    <property type="project" value="InterPro"/>
</dbReference>
<dbReference type="GO" id="GO:0004523">
    <property type="term" value="F:RNA-DNA hybrid ribonuclease activity"/>
    <property type="evidence" value="ECO:0007669"/>
    <property type="project" value="UniProtKB-UniRule"/>
</dbReference>
<dbReference type="GO" id="GO:0043137">
    <property type="term" value="P:DNA replication, removal of RNA primer"/>
    <property type="evidence" value="ECO:0007669"/>
    <property type="project" value="TreeGrafter"/>
</dbReference>
<dbReference type="GO" id="GO:0006298">
    <property type="term" value="P:mismatch repair"/>
    <property type="evidence" value="ECO:0007669"/>
    <property type="project" value="TreeGrafter"/>
</dbReference>
<dbReference type="CDD" id="cd07182">
    <property type="entry name" value="RNase_HII_bacteria_HII_like"/>
    <property type="match status" value="1"/>
</dbReference>
<dbReference type="Gene3D" id="3.30.420.10">
    <property type="entry name" value="Ribonuclease H-like superfamily/Ribonuclease H"/>
    <property type="match status" value="1"/>
</dbReference>
<dbReference type="HAMAP" id="MF_00052_B">
    <property type="entry name" value="RNase_HII_B"/>
    <property type="match status" value="1"/>
</dbReference>
<dbReference type="InterPro" id="IPR022898">
    <property type="entry name" value="RNase_HII"/>
</dbReference>
<dbReference type="InterPro" id="IPR001352">
    <property type="entry name" value="RNase_HII/HIII"/>
</dbReference>
<dbReference type="InterPro" id="IPR024567">
    <property type="entry name" value="RNase_HII/HIII_dom"/>
</dbReference>
<dbReference type="InterPro" id="IPR012337">
    <property type="entry name" value="RNaseH-like_sf"/>
</dbReference>
<dbReference type="InterPro" id="IPR036397">
    <property type="entry name" value="RNaseH_sf"/>
</dbReference>
<dbReference type="NCBIfam" id="NF000595">
    <property type="entry name" value="PRK00015.1-3"/>
    <property type="match status" value="1"/>
</dbReference>
<dbReference type="PANTHER" id="PTHR10954:SF23">
    <property type="entry name" value="RIBONUCLEASE"/>
    <property type="match status" value="1"/>
</dbReference>
<dbReference type="PANTHER" id="PTHR10954">
    <property type="entry name" value="RIBONUCLEASE H2 SUBUNIT A"/>
    <property type="match status" value="1"/>
</dbReference>
<dbReference type="Pfam" id="PF01351">
    <property type="entry name" value="RNase_HII"/>
    <property type="match status" value="1"/>
</dbReference>
<dbReference type="SUPFAM" id="SSF53098">
    <property type="entry name" value="Ribonuclease H-like"/>
    <property type="match status" value="1"/>
</dbReference>
<dbReference type="PROSITE" id="PS51975">
    <property type="entry name" value="RNASE_H_2"/>
    <property type="match status" value="1"/>
</dbReference>
<proteinExistence type="inferred from homology"/>
<name>RNH2_CHLPM</name>
<keyword id="KW-0963">Cytoplasm</keyword>
<keyword id="KW-0255">Endonuclease</keyword>
<keyword id="KW-0378">Hydrolase</keyword>
<keyword id="KW-0464">Manganese</keyword>
<keyword id="KW-0479">Metal-binding</keyword>
<keyword id="KW-0540">Nuclease</keyword>
<reference key="1">
    <citation type="submission" date="2007-03" db="EMBL/GenBank/DDBJ databases">
        <title>Complete sequence of Prosthecochloris vibrioformis DSM 265.</title>
        <authorList>
            <consortium name="US DOE Joint Genome Institute"/>
            <person name="Copeland A."/>
            <person name="Lucas S."/>
            <person name="Lapidus A."/>
            <person name="Barry K."/>
            <person name="Detter J.C."/>
            <person name="Glavina del Rio T."/>
            <person name="Hammon N."/>
            <person name="Israni S."/>
            <person name="Pitluck S."/>
            <person name="Schmutz J."/>
            <person name="Larimer F."/>
            <person name="Land M."/>
            <person name="Hauser L."/>
            <person name="Mikhailova N."/>
            <person name="Li T."/>
            <person name="Overmann J."/>
            <person name="Schuster S.C."/>
            <person name="Bryant D.A."/>
            <person name="Richardson P."/>
        </authorList>
    </citation>
    <scope>NUCLEOTIDE SEQUENCE [LARGE SCALE GENOMIC DNA]</scope>
    <source>
        <strain>DSM 265 / 1930</strain>
    </source>
</reference>
<comment type="function">
    <text evidence="1">Endonuclease that specifically degrades the RNA of RNA-DNA hybrids.</text>
</comment>
<comment type="catalytic activity">
    <reaction evidence="1">
        <text>Endonucleolytic cleavage to 5'-phosphomonoester.</text>
        <dbReference type="EC" id="3.1.26.4"/>
    </reaction>
</comment>
<comment type="cofactor">
    <cofactor evidence="1">
        <name>Mn(2+)</name>
        <dbReference type="ChEBI" id="CHEBI:29035"/>
    </cofactor>
    <cofactor evidence="1">
        <name>Mg(2+)</name>
        <dbReference type="ChEBI" id="CHEBI:18420"/>
    </cofactor>
    <text evidence="1">Manganese or magnesium. Binds 1 divalent metal ion per monomer in the absence of substrate. May bind a second metal ion after substrate binding.</text>
</comment>
<comment type="subcellular location">
    <subcellularLocation>
        <location evidence="1">Cytoplasm</location>
    </subcellularLocation>
</comment>
<comment type="similarity">
    <text evidence="1">Belongs to the RNase HII family.</text>
</comment>
<accession>A4SC35</accession>
<sequence>MLTDYEEQLWNSMERICGIDEAGRGPLAGPVVAAAVVFPRWFRPGKGILGRMNDSKKLSPSLRREMAPAIQDAALAWSVSVVDAQTIDRINILSATMLAMNRAVGGLGLTPDMLLVDGNRFSPETPVAYRTLVGGDAYIYSIAAASVLAKTARDAIMSSYDRDYPEYGFARHAGYPTAMHISAIRQHGRCPIHRFSFKVRRLNEA</sequence>
<feature type="chain" id="PRO_0000334939" description="Ribonuclease HII">
    <location>
        <begin position="1"/>
        <end position="205"/>
    </location>
</feature>
<feature type="domain" description="RNase H type-2" evidence="2">
    <location>
        <begin position="14"/>
        <end position="205"/>
    </location>
</feature>
<feature type="binding site" evidence="1">
    <location>
        <position position="20"/>
    </location>
    <ligand>
        <name>a divalent metal cation</name>
        <dbReference type="ChEBI" id="CHEBI:60240"/>
    </ligand>
</feature>
<feature type="binding site" evidence="1">
    <location>
        <position position="21"/>
    </location>
    <ligand>
        <name>a divalent metal cation</name>
        <dbReference type="ChEBI" id="CHEBI:60240"/>
    </ligand>
</feature>
<feature type="binding site" evidence="1">
    <location>
        <position position="117"/>
    </location>
    <ligand>
        <name>a divalent metal cation</name>
        <dbReference type="ChEBI" id="CHEBI:60240"/>
    </ligand>
</feature>